<feature type="chain" id="PRO_0000409564" description="Phototropic-responsive NPH3 family protein NPY2">
    <location>
        <begin position="1"/>
        <end position="634"/>
    </location>
</feature>
<feature type="domain" description="BTB" evidence="3">
    <location>
        <begin position="29"/>
        <end position="97"/>
    </location>
</feature>
<feature type="domain" description="NPH3" evidence="4">
    <location>
        <begin position="207"/>
        <end position="488"/>
    </location>
</feature>
<feature type="region of interest" description="Disordered" evidence="5">
    <location>
        <begin position="492"/>
        <end position="517"/>
    </location>
</feature>
<feature type="region of interest" description="Disordered" evidence="5">
    <location>
        <begin position="584"/>
        <end position="634"/>
    </location>
</feature>
<feature type="compositionally biased region" description="Gly residues" evidence="5">
    <location>
        <begin position="588"/>
        <end position="602"/>
    </location>
</feature>
<feature type="compositionally biased region" description="Polar residues" evidence="5">
    <location>
        <begin position="619"/>
        <end position="634"/>
    </location>
</feature>
<feature type="modified residue" description="Phosphotyrosine" evidence="2">
    <location>
        <position position="429"/>
    </location>
</feature>
<feature type="sequence conflict" description="In Ref. 3; DQ069815." evidence="14" ref="3">
    <original>E</original>
    <variation>K</variation>
    <location>
        <position position="217"/>
    </location>
</feature>
<organism>
    <name type="scientific">Arabidopsis thaliana</name>
    <name type="common">Mouse-ear cress</name>
    <dbReference type="NCBI Taxonomy" id="3702"/>
    <lineage>
        <taxon>Eukaryota</taxon>
        <taxon>Viridiplantae</taxon>
        <taxon>Streptophyta</taxon>
        <taxon>Embryophyta</taxon>
        <taxon>Tracheophyta</taxon>
        <taxon>Spermatophyta</taxon>
        <taxon>Magnoliopsida</taxon>
        <taxon>eudicotyledons</taxon>
        <taxon>Gunneridae</taxon>
        <taxon>Pentapetalae</taxon>
        <taxon>rosids</taxon>
        <taxon>malvids</taxon>
        <taxon>Brassicales</taxon>
        <taxon>Brassicaceae</taxon>
        <taxon>Camelineae</taxon>
        <taxon>Arabidopsis</taxon>
    </lineage>
</organism>
<protein>
    <recommendedName>
        <fullName evidence="15 16">Phototropic-responsive NPH3 family protein NPY2</fullName>
    </recommendedName>
    <alternativeName>
        <fullName evidence="13">MAB4/ENP/NPY1-like proten 3</fullName>
    </alternativeName>
    <alternativeName>
        <fullName evidence="11 12">Protein NAKED PINS IN YUC MUTANTS 2</fullName>
    </alternativeName>
</protein>
<gene>
    <name evidence="11 12" type="primary">NPY2</name>
    <name evidence="13" type="synonym">MEL3</name>
    <name evidence="17" type="ordered locus">At2g14820</name>
    <name evidence="18" type="ORF">F26C24.4</name>
</gene>
<comment type="function">
    <text evidence="1 7 8 9 10">May act as a substrate-specific adapter of an E3 ubiquitin-protein ligase complex (CUL3-RBX1-BTB) which mediates the ubiquitination and subsequent proteasomal degradation of target proteins (By similarity). Plays an essential role in auxin-mediated organogenesis and in root gravitropic responses through the control of PIN proteins (e.g. PIN1 and PIN2) polarity in the root tip endodermal cell layer and in shoot epidermis (PubMed:19075219, PubMed:20833732, PubMed:21490067). Recruited to the plasma membrane by PINs (e.g. PIN1 and PIN2) and, in concert with AGC kinases-mediated (e.g. D6PK and PID) PINs phosphorylation, maintains their polarity through limiting lateral diffusion-based escape (PubMed:33705718).</text>
</comment>
<comment type="pathway">
    <text evidence="1">Protein modification; protein ubiquitination.</text>
</comment>
<comment type="subcellular location">
    <subcellularLocation>
        <location evidence="9">Cell membrane</location>
    </subcellularLocation>
    <subcellularLocation>
        <location evidence="9">Cytoplasm</location>
        <location evidence="9">Cytosol</location>
    </subcellularLocation>
    <text evidence="9">Polar localization at the cell periphery almost identical to PIN proteins polarity, in the upper side of the plasma membrane of root epidermis (PubMed:21490067). Weakly observed in the cytosol of the root tip quiescent center (QC) and in columella initial cells, sometimes close to the basal side of the plasma membrane (PubMed:21490067).</text>
</comment>
<comment type="tissue specificity">
    <text evidence="7 8 9">Specifically expressed in the hypophysis and the root meristems in the embryos (PubMed:19075219, PubMed:20833732). Highly expressed in primary root tips and radicles (PubMed:19075219, PubMed:20833732, PubMed:21490067).</text>
</comment>
<comment type="domain">
    <text evidence="6">The BTB/POZ domain mediates the interaction with some component of ubiquitin ligase complexes.</text>
</comment>
<comment type="disruption phenotype">
    <text evidence="9 10">Plants lacking NPY2/MEL3, NPY3/MEL2, NPY4/MEL4 and NPY5/MEL1 exhibit severe reduction in PIN proteins (e.g. PIN1 and PIN2) abundance which are less phosphorylated and lacking polar localization in the root endodermal cell layer and in shoot epidermis due to increased clathrin-dependent internalization from the plasma membrane; this leads to defective expression of auxin responsive genes, defects in cotyledons and floral organs formation, as well as impaired root gravitropic responses.</text>
</comment>
<comment type="similarity">
    <text evidence="4">Belongs to the NPH3 family.</text>
</comment>
<reference key="1">
    <citation type="journal article" date="1999" name="Nature">
        <title>Sequence and analysis of chromosome 2 of the plant Arabidopsis thaliana.</title>
        <authorList>
            <person name="Lin X."/>
            <person name="Kaul S."/>
            <person name="Rounsley S.D."/>
            <person name="Shea T.P."/>
            <person name="Benito M.-I."/>
            <person name="Town C.D."/>
            <person name="Fujii C.Y."/>
            <person name="Mason T.M."/>
            <person name="Bowman C.L."/>
            <person name="Barnstead M.E."/>
            <person name="Feldblyum T.V."/>
            <person name="Buell C.R."/>
            <person name="Ketchum K.A."/>
            <person name="Lee J.J."/>
            <person name="Ronning C.M."/>
            <person name="Koo H.L."/>
            <person name="Moffat K.S."/>
            <person name="Cronin L.A."/>
            <person name="Shen M."/>
            <person name="Pai G."/>
            <person name="Van Aken S."/>
            <person name="Umayam L."/>
            <person name="Tallon L.J."/>
            <person name="Gill J.E."/>
            <person name="Adams M.D."/>
            <person name="Carrera A.J."/>
            <person name="Creasy T.H."/>
            <person name="Goodman H.M."/>
            <person name="Somerville C.R."/>
            <person name="Copenhaver G.P."/>
            <person name="Preuss D."/>
            <person name="Nierman W.C."/>
            <person name="White O."/>
            <person name="Eisen J.A."/>
            <person name="Salzberg S.L."/>
            <person name="Fraser C.M."/>
            <person name="Venter J.C."/>
        </authorList>
    </citation>
    <scope>NUCLEOTIDE SEQUENCE [LARGE SCALE GENOMIC DNA]</scope>
    <source>
        <strain>cv. Columbia</strain>
    </source>
</reference>
<reference key="2">
    <citation type="journal article" date="2017" name="Plant J.">
        <title>Araport11: a complete reannotation of the Arabidopsis thaliana reference genome.</title>
        <authorList>
            <person name="Cheng C.Y."/>
            <person name="Krishnakumar V."/>
            <person name="Chan A.P."/>
            <person name="Thibaud-Nissen F."/>
            <person name="Schobel S."/>
            <person name="Town C.D."/>
        </authorList>
    </citation>
    <scope>GENOME REANNOTATION</scope>
    <source>
        <strain>cv. Columbia</strain>
    </source>
</reference>
<reference key="3">
    <citation type="journal article" date="2005" name="Plant Physiol.">
        <title>Analysis of the cDNAs of hypothetical genes on Arabidopsis chromosome 2 reveals numerous transcript variants.</title>
        <authorList>
            <person name="Xiao Y.-L."/>
            <person name="Smith S.R."/>
            <person name="Ishmael N."/>
            <person name="Redman J.C."/>
            <person name="Kumar N."/>
            <person name="Monaghan E.L."/>
            <person name="Ayele M."/>
            <person name="Haas B.J."/>
            <person name="Wu H.C."/>
            <person name="Town C.D."/>
        </authorList>
    </citation>
    <scope>NUCLEOTIDE SEQUENCE [LARGE SCALE MRNA] OF 55-254</scope>
    <source>
        <strain>cv. Columbia</strain>
    </source>
</reference>
<reference key="4">
    <citation type="journal article" date="2005" name="J. Biol. Chem.">
        <title>Cullins 3a and 3b assemble with members of the broad complex/tramtrack/bric-a-brac (BTB) protein family to form essential ubiquitin-protein ligases (E3s) in Arabidopsis.</title>
        <authorList>
            <person name="Gingerich D.J."/>
            <person name="Gagne J.M."/>
            <person name="Salter D.W."/>
            <person name="Hellmann H."/>
            <person name="Estelle M."/>
            <person name="Ma L."/>
            <person name="Vierstra R.D."/>
        </authorList>
    </citation>
    <scope>DOMAIN BTB</scope>
</reference>
<reference key="5">
    <citation type="journal article" date="2008" name="Proc. Natl. Acad. Sci. U.S.A.">
        <title>NPY genes and AGC kinases define two key steps in auxin-mediated organogenesis in Arabidopsis.</title>
        <authorList>
            <person name="Cheng Y."/>
            <person name="Qin G."/>
            <person name="Dai X."/>
            <person name="Zhao Y."/>
        </authorList>
    </citation>
    <scope>FUNCTION</scope>
    <scope>TISSUE SPECIFICITY</scope>
    <scope>GENE FAMILY</scope>
    <scope>NOMENCLATURE</scope>
</reference>
<reference key="6">
    <citation type="journal article" date="2011" name="Development">
        <title>Polar-localized NPH3-like proteins regulate polarity and endocytosis of PIN-FORMED auxin efflux carriers.</title>
        <authorList>
            <person name="Furutani M."/>
            <person name="Sakamoto N."/>
            <person name="Yoshida S."/>
            <person name="Kajiwara T."/>
            <person name="Robert H.S."/>
            <person name="Friml J."/>
            <person name="Tasaka M."/>
        </authorList>
    </citation>
    <scope>FUNCTION</scope>
    <scope>DISRUPTION PHENOTYPE</scope>
    <scope>SUBCELLULAR LOCATION</scope>
    <scope>TISSUE SPECIFICITY</scope>
    <scope>GENE FAMILY</scope>
    <source>
        <strain>cv. Columbia</strain>
    </source>
</reference>
<reference key="7">
    <citation type="journal article" date="2011" name="Mol. Plant">
        <title>NPY genes play an essential role in root gravitropic responses in Arabidopsis.</title>
        <authorList>
            <person name="Li Y."/>
            <person name="Dai X."/>
            <person name="Cheng Y."/>
            <person name="Zhao Y."/>
        </authorList>
    </citation>
    <scope>FUNCTION</scope>
    <scope>TISSUE SPECIFICITY</scope>
    <scope>GENE FAMILY</scope>
    <scope>NOMENCLATURE</scope>
</reference>
<reference key="8">
    <citation type="journal article" date="2021" name="Curr. Biol.">
        <title>AGC kinases and MAB4/MEL proteins maintain PIN polarity by limiting lateral diffusion in plant cells.</title>
        <authorList>
            <person name="Glanc M."/>
            <person name="Van Gelderen K."/>
            <person name="Hoermayer L."/>
            <person name="Tan S."/>
            <person name="Naramoto S."/>
            <person name="Zhang X."/>
            <person name="Domjan D."/>
            <person name="Vcelarova L."/>
            <person name="Hauschild R."/>
            <person name="Johnson A."/>
            <person name="de Koning E."/>
            <person name="van Dop M."/>
            <person name="Rademacher E."/>
            <person name="Janson S."/>
            <person name="Wei X."/>
            <person name="Molnar G."/>
            <person name="Fendrych M."/>
            <person name="De Rybel B."/>
            <person name="Offringa R."/>
            <person name="Friml J."/>
        </authorList>
    </citation>
    <scope>FUNCTION</scope>
    <scope>DISRUPTION PHENOTYPE</scope>
    <source>
        <strain>cv. Columbia</strain>
    </source>
</reference>
<dbReference type="EMBL" id="AC004705">
    <property type="protein sequence ID" value="AAC24177.1"/>
    <property type="molecule type" value="Genomic_DNA"/>
</dbReference>
<dbReference type="EMBL" id="CP002685">
    <property type="protein sequence ID" value="AEC06336.1"/>
    <property type="molecule type" value="Genomic_DNA"/>
</dbReference>
<dbReference type="EMBL" id="CP002685">
    <property type="protein sequence ID" value="ANM61860.1"/>
    <property type="molecule type" value="Genomic_DNA"/>
</dbReference>
<dbReference type="EMBL" id="DQ069815">
    <property type="status" value="NOT_ANNOTATED_CDS"/>
    <property type="molecule type" value="mRNA"/>
</dbReference>
<dbReference type="PIR" id="T02594">
    <property type="entry name" value="T02594"/>
</dbReference>
<dbReference type="RefSeq" id="NP_001318225.1">
    <property type="nucleotide sequence ID" value="NM_001335440.1"/>
</dbReference>
<dbReference type="RefSeq" id="NP_179089.1">
    <property type="nucleotide sequence ID" value="NM_127046.2"/>
</dbReference>
<dbReference type="SMR" id="O80970"/>
<dbReference type="FunCoup" id="O80970">
    <property type="interactions" value="6"/>
</dbReference>
<dbReference type="STRING" id="3702.O80970"/>
<dbReference type="iPTMnet" id="O80970"/>
<dbReference type="PaxDb" id="3702-AT2G14820.1"/>
<dbReference type="ProteomicsDB" id="250549"/>
<dbReference type="EnsemblPlants" id="AT2G14820.1">
    <property type="protein sequence ID" value="AT2G14820.1"/>
    <property type="gene ID" value="AT2G14820"/>
</dbReference>
<dbReference type="EnsemblPlants" id="AT2G14820.2">
    <property type="protein sequence ID" value="AT2G14820.2"/>
    <property type="gene ID" value="AT2G14820"/>
</dbReference>
<dbReference type="GeneID" id="815970"/>
<dbReference type="Gramene" id="AT2G14820.1">
    <property type="protein sequence ID" value="AT2G14820.1"/>
    <property type="gene ID" value="AT2G14820"/>
</dbReference>
<dbReference type="Gramene" id="AT2G14820.2">
    <property type="protein sequence ID" value="AT2G14820.2"/>
    <property type="gene ID" value="AT2G14820"/>
</dbReference>
<dbReference type="KEGG" id="ath:AT2G14820"/>
<dbReference type="Araport" id="AT2G14820"/>
<dbReference type="TAIR" id="AT2G14820">
    <property type="gene designation" value="NPY2"/>
</dbReference>
<dbReference type="eggNOG" id="ENOG502QSYM">
    <property type="taxonomic scope" value="Eukaryota"/>
</dbReference>
<dbReference type="HOGENOM" id="CLU_005994_5_2_1"/>
<dbReference type="InParanoid" id="O80970"/>
<dbReference type="OMA" id="HPGISKG"/>
<dbReference type="PhylomeDB" id="O80970"/>
<dbReference type="UniPathway" id="UPA00143"/>
<dbReference type="PRO" id="PR:O80970"/>
<dbReference type="Proteomes" id="UP000006548">
    <property type="component" value="Chromosome 2"/>
</dbReference>
<dbReference type="ExpressionAtlas" id="O80970">
    <property type="expression patterns" value="baseline and differential"/>
</dbReference>
<dbReference type="GO" id="GO:0071944">
    <property type="term" value="C:cell periphery"/>
    <property type="evidence" value="ECO:0000314"/>
    <property type="project" value="TAIR"/>
</dbReference>
<dbReference type="GO" id="GO:0005829">
    <property type="term" value="C:cytosol"/>
    <property type="evidence" value="ECO:0000314"/>
    <property type="project" value="UniProtKB"/>
</dbReference>
<dbReference type="GO" id="GO:0005886">
    <property type="term" value="C:plasma membrane"/>
    <property type="evidence" value="ECO:0000314"/>
    <property type="project" value="UniProtKB"/>
</dbReference>
<dbReference type="GO" id="GO:0009958">
    <property type="term" value="P:positive gravitropism"/>
    <property type="evidence" value="ECO:0000316"/>
    <property type="project" value="UniProtKB"/>
</dbReference>
<dbReference type="GO" id="GO:0016567">
    <property type="term" value="P:protein ubiquitination"/>
    <property type="evidence" value="ECO:0007669"/>
    <property type="project" value="UniProtKB-UniPathway"/>
</dbReference>
<dbReference type="Gene3D" id="3.30.710.10">
    <property type="entry name" value="Potassium Channel Kv1.1, Chain A"/>
    <property type="match status" value="1"/>
</dbReference>
<dbReference type="InterPro" id="IPR000210">
    <property type="entry name" value="BTB/POZ_dom"/>
</dbReference>
<dbReference type="InterPro" id="IPR043454">
    <property type="entry name" value="NPH3/RPT2-like"/>
</dbReference>
<dbReference type="InterPro" id="IPR027356">
    <property type="entry name" value="NPH3_dom"/>
</dbReference>
<dbReference type="InterPro" id="IPR011333">
    <property type="entry name" value="SKP1/BTB/POZ_sf"/>
</dbReference>
<dbReference type="PANTHER" id="PTHR32370">
    <property type="entry name" value="OS12G0117600 PROTEIN"/>
    <property type="match status" value="1"/>
</dbReference>
<dbReference type="Pfam" id="PF00651">
    <property type="entry name" value="BTB"/>
    <property type="match status" value="1"/>
</dbReference>
<dbReference type="Pfam" id="PF03000">
    <property type="entry name" value="NPH3"/>
    <property type="match status" value="1"/>
</dbReference>
<dbReference type="SUPFAM" id="SSF54695">
    <property type="entry name" value="POZ domain"/>
    <property type="match status" value="1"/>
</dbReference>
<dbReference type="PROSITE" id="PS51649">
    <property type="entry name" value="NPH3"/>
    <property type="match status" value="1"/>
</dbReference>
<accession>O80970</accession>
<proteinExistence type="evidence at transcript level"/>
<evidence type="ECO:0000250" key="1">
    <source>
        <dbReference type="UniProtKB" id="Q66GP0"/>
    </source>
</evidence>
<evidence type="ECO:0000250" key="2">
    <source>
        <dbReference type="UniProtKB" id="Q9FMF5"/>
    </source>
</evidence>
<evidence type="ECO:0000255" key="3">
    <source>
        <dbReference type="PROSITE-ProRule" id="PRU00037"/>
    </source>
</evidence>
<evidence type="ECO:0000255" key="4">
    <source>
        <dbReference type="PROSITE-ProRule" id="PRU00982"/>
    </source>
</evidence>
<evidence type="ECO:0000256" key="5">
    <source>
        <dbReference type="SAM" id="MobiDB-lite"/>
    </source>
</evidence>
<evidence type="ECO:0000269" key="6">
    <source>
    </source>
</evidence>
<evidence type="ECO:0000269" key="7">
    <source>
    </source>
</evidence>
<evidence type="ECO:0000269" key="8">
    <source>
    </source>
</evidence>
<evidence type="ECO:0000269" key="9">
    <source>
    </source>
</evidence>
<evidence type="ECO:0000269" key="10">
    <source>
    </source>
</evidence>
<evidence type="ECO:0000303" key="11">
    <source>
    </source>
</evidence>
<evidence type="ECO:0000303" key="12">
    <source>
    </source>
</evidence>
<evidence type="ECO:0000303" key="13">
    <source>
    </source>
</evidence>
<evidence type="ECO:0000305" key="14"/>
<evidence type="ECO:0000305" key="15">
    <source>
    </source>
</evidence>
<evidence type="ECO:0000305" key="16">
    <source>
    </source>
</evidence>
<evidence type="ECO:0000312" key="17">
    <source>
        <dbReference type="Araport" id="AT2G14820"/>
    </source>
</evidence>
<evidence type="ECO:0000312" key="18">
    <source>
        <dbReference type="EMBL" id="AAC24177.1"/>
    </source>
</evidence>
<name>NPY2_ARATH</name>
<keyword id="KW-1003">Cell membrane</keyword>
<keyword id="KW-0963">Cytoplasm</keyword>
<keyword id="KW-0472">Membrane</keyword>
<keyword id="KW-0597">Phosphoprotein</keyword>
<keyword id="KW-1185">Reference proteome</keyword>
<keyword id="KW-0833">Ubl conjugation pathway</keyword>
<sequence length="634" mass="70194">MKFMKIGSKLDSFKTDGNNVRYVENELASDISVDVEGSRFCLHKFPLLSKCACLQKLLSSTDKNNIDDIDISGIPGGPTAFETCAKFCYGMTVTLSAYNVVATRCAAEYLGMHETVEKGNLIYKIDVFLSSSLFRSWKDSIIVLQTTKPFLPLSEDLKLVSLCIDAIATKACVDVSHVEWSYTYNKKKLAEENNGADSIKARDVPHDWWVEDLCELEIDYYKRVIMNIKTKCILGGEVIGEALKAYGYRRLSGFNKGVMEQGDLVKHKTIIETLVWLLPAEKNSVSCGFLLKLLKAVTMVNSGEVVKEQLVRRIGQQLEEASMAELLIKSHQGSETLYDVDLVQKIVMEFMRRDKNSEIEVQDDEDGFEVQEVRKLPGILSEASKLMVAKVIDSYLTEIAKDPNLPASKFIDVAESVTSIPRPAHDALYRAIDMFLKEHPGITKGEKKRMCKLMDCRKLSVEACMHAVQNDRLPLRVVVQVLFFEQVRAAASSGSSTPDLPRGMGRELRSCGTYGSSRSVPTVMEDEWEAVATEEEMRALKSEIAALKLQEESGRKSMDRAGVTAISKIRSLIMSKKIFGKKVQLQSKGGGEKNNGGGGGGSDSSESLGSMNAAEETAKTATPSRNLTRRVSVS</sequence>